<dbReference type="EC" id="3.6.4.13"/>
<dbReference type="EMBL" id="CH408155">
    <property type="protein sequence ID" value="EDK36455.1"/>
    <property type="molecule type" value="Genomic_DNA"/>
</dbReference>
<dbReference type="RefSeq" id="XP_001487176.1">
    <property type="nucleotide sequence ID" value="XM_001487126.1"/>
</dbReference>
<dbReference type="SMR" id="A5DB98"/>
<dbReference type="FunCoup" id="A5DB98">
    <property type="interactions" value="1278"/>
</dbReference>
<dbReference type="STRING" id="294746.A5DB98"/>
<dbReference type="GeneID" id="5128943"/>
<dbReference type="KEGG" id="pgu:PGUG_00553"/>
<dbReference type="VEuPathDB" id="FungiDB:PGUG_00553"/>
<dbReference type="eggNOG" id="KOG0327">
    <property type="taxonomic scope" value="Eukaryota"/>
</dbReference>
<dbReference type="HOGENOM" id="CLU_003041_1_0_1"/>
<dbReference type="InParanoid" id="A5DB98"/>
<dbReference type="OMA" id="FGCQALV"/>
<dbReference type="OrthoDB" id="10265785at2759"/>
<dbReference type="Proteomes" id="UP000001997">
    <property type="component" value="Unassembled WGS sequence"/>
</dbReference>
<dbReference type="GO" id="GO:0005737">
    <property type="term" value="C:cytoplasm"/>
    <property type="evidence" value="ECO:0007669"/>
    <property type="project" value="UniProtKB-SubCell"/>
</dbReference>
<dbReference type="GO" id="GO:0005524">
    <property type="term" value="F:ATP binding"/>
    <property type="evidence" value="ECO:0007669"/>
    <property type="project" value="UniProtKB-KW"/>
</dbReference>
<dbReference type="GO" id="GO:0016887">
    <property type="term" value="F:ATP hydrolysis activity"/>
    <property type="evidence" value="ECO:0007669"/>
    <property type="project" value="RHEA"/>
</dbReference>
<dbReference type="GO" id="GO:0003723">
    <property type="term" value="F:RNA binding"/>
    <property type="evidence" value="ECO:0007669"/>
    <property type="project" value="UniProtKB-KW"/>
</dbReference>
<dbReference type="GO" id="GO:0003724">
    <property type="term" value="F:RNA helicase activity"/>
    <property type="evidence" value="ECO:0007669"/>
    <property type="project" value="UniProtKB-EC"/>
</dbReference>
<dbReference type="GO" id="GO:0003743">
    <property type="term" value="F:translation initiation factor activity"/>
    <property type="evidence" value="ECO:0007669"/>
    <property type="project" value="UniProtKB-KW"/>
</dbReference>
<dbReference type="CDD" id="cd18046">
    <property type="entry name" value="DEADc_EIF4AII_EIF4AI_DDX2"/>
    <property type="match status" value="1"/>
</dbReference>
<dbReference type="CDD" id="cd18787">
    <property type="entry name" value="SF2_C_DEAD"/>
    <property type="match status" value="1"/>
</dbReference>
<dbReference type="FunFam" id="3.40.50.300:FF:000089">
    <property type="entry name" value="Eukaryotic initiation factor 4A-II"/>
    <property type="match status" value="1"/>
</dbReference>
<dbReference type="FunFam" id="3.40.50.300:FF:000031">
    <property type="entry name" value="Eukaryotic initiation factor 4A-III"/>
    <property type="match status" value="1"/>
</dbReference>
<dbReference type="Gene3D" id="3.40.50.300">
    <property type="entry name" value="P-loop containing nucleotide triphosphate hydrolases"/>
    <property type="match status" value="2"/>
</dbReference>
<dbReference type="InterPro" id="IPR011545">
    <property type="entry name" value="DEAD/DEAH_box_helicase_dom"/>
</dbReference>
<dbReference type="InterPro" id="IPR044728">
    <property type="entry name" value="EIF4A_DEADc"/>
</dbReference>
<dbReference type="InterPro" id="IPR014001">
    <property type="entry name" value="Helicase_ATP-bd"/>
</dbReference>
<dbReference type="InterPro" id="IPR001650">
    <property type="entry name" value="Helicase_C-like"/>
</dbReference>
<dbReference type="InterPro" id="IPR027417">
    <property type="entry name" value="P-loop_NTPase"/>
</dbReference>
<dbReference type="InterPro" id="IPR000629">
    <property type="entry name" value="RNA-helicase_DEAD-box_CS"/>
</dbReference>
<dbReference type="InterPro" id="IPR014014">
    <property type="entry name" value="RNA_helicase_DEAD_Q_motif"/>
</dbReference>
<dbReference type="PANTHER" id="PTHR47958">
    <property type="entry name" value="ATP-DEPENDENT RNA HELICASE DBP3"/>
    <property type="match status" value="1"/>
</dbReference>
<dbReference type="Pfam" id="PF00270">
    <property type="entry name" value="DEAD"/>
    <property type="match status" value="1"/>
</dbReference>
<dbReference type="Pfam" id="PF00271">
    <property type="entry name" value="Helicase_C"/>
    <property type="match status" value="1"/>
</dbReference>
<dbReference type="SMART" id="SM00487">
    <property type="entry name" value="DEXDc"/>
    <property type="match status" value="1"/>
</dbReference>
<dbReference type="SMART" id="SM00490">
    <property type="entry name" value="HELICc"/>
    <property type="match status" value="1"/>
</dbReference>
<dbReference type="SUPFAM" id="SSF52540">
    <property type="entry name" value="P-loop containing nucleoside triphosphate hydrolases"/>
    <property type="match status" value="1"/>
</dbReference>
<dbReference type="PROSITE" id="PS00039">
    <property type="entry name" value="DEAD_ATP_HELICASE"/>
    <property type="match status" value="1"/>
</dbReference>
<dbReference type="PROSITE" id="PS51192">
    <property type="entry name" value="HELICASE_ATP_BIND_1"/>
    <property type="match status" value="1"/>
</dbReference>
<dbReference type="PROSITE" id="PS51194">
    <property type="entry name" value="HELICASE_CTER"/>
    <property type="match status" value="1"/>
</dbReference>
<dbReference type="PROSITE" id="PS51195">
    <property type="entry name" value="Q_MOTIF"/>
    <property type="match status" value="1"/>
</dbReference>
<sequence>MSQEFNEIDANTIETNYDNVVYSFDDLNLKPNIVRGIFGYGYESPSAIQQRAILPITEGRDVLAQAQSGTGKTATFTISALQRIDENLKATQALILAPTRELALQIQNVITHIGLYLNVTVHASIGGTSMKDDIEAFKSGVQIVVGTPGRVFDMIERRFFRTDKVKMFIMDEADEMLSSGFKEQIYNIFRLLPETTQVVLLSATMPQDVLEVTTKFMNNPVRILVKKDELTLEGIKQFYINVEQEDFKFDCLCDLYDSISVTQAVIFCNTRSKVEFLTTKLKAENFTVSAIHADLPQSDRDTIMNEFRSGSSRILIATDLLARGIDVQQVSLVINYDLPANKENYIHRIGRGGRFGRKGVAINFVTDEDVGMMREIEKFYSTQIEEMPANIGELFN</sequence>
<keyword id="KW-0067">ATP-binding</keyword>
<keyword id="KW-0963">Cytoplasm</keyword>
<keyword id="KW-0347">Helicase</keyword>
<keyword id="KW-0378">Hydrolase</keyword>
<keyword id="KW-0396">Initiation factor</keyword>
<keyword id="KW-0547">Nucleotide-binding</keyword>
<keyword id="KW-0648">Protein biosynthesis</keyword>
<keyword id="KW-1185">Reference proteome</keyword>
<keyword id="KW-0694">RNA-binding</keyword>
<protein>
    <recommendedName>
        <fullName>ATP-dependent RNA helicase eIF4A</fullName>
        <ecNumber>3.6.4.13</ecNumber>
    </recommendedName>
    <alternativeName>
        <fullName>Eukaryotic initiation factor 4A</fullName>
        <shortName>eIF-4A</shortName>
    </alternativeName>
    <alternativeName>
        <fullName>Translation initiation factor 1</fullName>
    </alternativeName>
</protein>
<accession>A5DB98</accession>
<feature type="chain" id="PRO_0000294606" description="ATP-dependent RNA helicase eIF4A">
    <location>
        <begin position="1"/>
        <end position="396"/>
    </location>
</feature>
<feature type="domain" description="Helicase ATP-binding" evidence="2">
    <location>
        <begin position="53"/>
        <end position="223"/>
    </location>
</feature>
<feature type="domain" description="Helicase C-terminal" evidence="3">
    <location>
        <begin position="234"/>
        <end position="395"/>
    </location>
</feature>
<feature type="short sequence motif" description="Q motif">
    <location>
        <begin position="22"/>
        <end position="50"/>
    </location>
</feature>
<feature type="short sequence motif" description="DEAD box">
    <location>
        <begin position="171"/>
        <end position="174"/>
    </location>
</feature>
<feature type="binding site" evidence="2">
    <location>
        <begin position="66"/>
        <end position="73"/>
    </location>
    <ligand>
        <name>ATP</name>
        <dbReference type="ChEBI" id="CHEBI:30616"/>
    </ligand>
</feature>
<gene>
    <name type="primary">TIF1</name>
    <name type="synonym">TIF41</name>
    <name type="ORF">PGUG_00553</name>
</gene>
<evidence type="ECO:0000250" key="1"/>
<evidence type="ECO:0000255" key="2">
    <source>
        <dbReference type="PROSITE-ProRule" id="PRU00541"/>
    </source>
</evidence>
<evidence type="ECO:0000255" key="3">
    <source>
        <dbReference type="PROSITE-ProRule" id="PRU00542"/>
    </source>
</evidence>
<evidence type="ECO:0000305" key="4"/>
<organism>
    <name type="scientific">Meyerozyma guilliermondii (strain ATCC 6260 / CBS 566 / DSM 6381 / JCM 1539 / NBRC 10279 / NRRL Y-324)</name>
    <name type="common">Yeast</name>
    <name type="synonym">Candida guilliermondii</name>
    <dbReference type="NCBI Taxonomy" id="294746"/>
    <lineage>
        <taxon>Eukaryota</taxon>
        <taxon>Fungi</taxon>
        <taxon>Dikarya</taxon>
        <taxon>Ascomycota</taxon>
        <taxon>Saccharomycotina</taxon>
        <taxon>Pichiomycetes</taxon>
        <taxon>Debaryomycetaceae</taxon>
        <taxon>Meyerozyma</taxon>
    </lineage>
</organism>
<reference key="1">
    <citation type="journal article" date="2009" name="Nature">
        <title>Evolution of pathogenicity and sexual reproduction in eight Candida genomes.</title>
        <authorList>
            <person name="Butler G."/>
            <person name="Rasmussen M.D."/>
            <person name="Lin M.F."/>
            <person name="Santos M.A.S."/>
            <person name="Sakthikumar S."/>
            <person name="Munro C.A."/>
            <person name="Rheinbay E."/>
            <person name="Grabherr M."/>
            <person name="Forche A."/>
            <person name="Reedy J.L."/>
            <person name="Agrafioti I."/>
            <person name="Arnaud M.B."/>
            <person name="Bates S."/>
            <person name="Brown A.J.P."/>
            <person name="Brunke S."/>
            <person name="Costanzo M.C."/>
            <person name="Fitzpatrick D.A."/>
            <person name="de Groot P.W.J."/>
            <person name="Harris D."/>
            <person name="Hoyer L.L."/>
            <person name="Hube B."/>
            <person name="Klis F.M."/>
            <person name="Kodira C."/>
            <person name="Lennard N."/>
            <person name="Logue M.E."/>
            <person name="Martin R."/>
            <person name="Neiman A.M."/>
            <person name="Nikolaou E."/>
            <person name="Quail M.A."/>
            <person name="Quinn J."/>
            <person name="Santos M.C."/>
            <person name="Schmitzberger F.F."/>
            <person name="Sherlock G."/>
            <person name="Shah P."/>
            <person name="Silverstein K.A.T."/>
            <person name="Skrzypek M.S."/>
            <person name="Soll D."/>
            <person name="Staggs R."/>
            <person name="Stansfield I."/>
            <person name="Stumpf M.P.H."/>
            <person name="Sudbery P.E."/>
            <person name="Srikantha T."/>
            <person name="Zeng Q."/>
            <person name="Berman J."/>
            <person name="Berriman M."/>
            <person name="Heitman J."/>
            <person name="Gow N.A.R."/>
            <person name="Lorenz M.C."/>
            <person name="Birren B.W."/>
            <person name="Kellis M."/>
            <person name="Cuomo C.A."/>
        </authorList>
    </citation>
    <scope>NUCLEOTIDE SEQUENCE [LARGE SCALE GENOMIC DNA]</scope>
    <source>
        <strain>ATCC 6260 / CBS 566 / DSM 6381 / JCM 1539 / NBRC 10279 / NRRL Y-324</strain>
    </source>
</reference>
<proteinExistence type="inferred from homology"/>
<name>IF4A_PICGU</name>
<comment type="function">
    <text evidence="1">ATP-dependent RNA helicase which is a subunit of the eIF4F complex involved in cap recognition and is required for mRNA binding to ribosome. In the current model of translation initiation, eIF4A unwinds RNA secondary structures in the 5'-UTR of mRNAs which is necessary to allow efficient binding of the small ribosomal subunit, and subsequent scanning for the initiator codon (By similarity).</text>
</comment>
<comment type="catalytic activity">
    <reaction>
        <text>ATP + H2O = ADP + phosphate + H(+)</text>
        <dbReference type="Rhea" id="RHEA:13065"/>
        <dbReference type="ChEBI" id="CHEBI:15377"/>
        <dbReference type="ChEBI" id="CHEBI:15378"/>
        <dbReference type="ChEBI" id="CHEBI:30616"/>
        <dbReference type="ChEBI" id="CHEBI:43474"/>
        <dbReference type="ChEBI" id="CHEBI:456216"/>
        <dbReference type="EC" id="3.6.4.13"/>
    </reaction>
</comment>
<comment type="subunit">
    <text evidence="1">Component of the eIF4F complex, which composition varies with external and internal environmental conditions. It is composed of at least eIF4A, eIF4E and eIF4G (By similarity).</text>
</comment>
<comment type="subcellular location">
    <subcellularLocation>
        <location evidence="1">Cytoplasm</location>
    </subcellularLocation>
</comment>
<comment type="domain">
    <text>The Q motif is unique to and characteristic of the DEAD box family of RNA helicases and controls ATP binding and hydrolysis.</text>
</comment>
<comment type="similarity">
    <text evidence="4">Belongs to the DEAD box helicase family. eIF4A subfamily.</text>
</comment>